<accession>B4PJ01</accession>
<feature type="chain" id="PRO_0000367534" description="SAGA-associated factor 11 homolog">
    <location>
        <begin position="1"/>
        <end position="196"/>
    </location>
</feature>
<feature type="zinc finger region" description="SGF11-type" evidence="2">
    <location>
        <begin position="106"/>
        <end position="127"/>
    </location>
</feature>
<feature type="region of interest" description="Disordered" evidence="3">
    <location>
        <begin position="1"/>
        <end position="22"/>
    </location>
</feature>
<feature type="region of interest" description="Disordered" evidence="3">
    <location>
        <begin position="144"/>
        <end position="196"/>
    </location>
</feature>
<feature type="compositionally biased region" description="Low complexity" evidence="3">
    <location>
        <begin position="180"/>
        <end position="196"/>
    </location>
</feature>
<feature type="modified residue" description="Phosphoserine" evidence="1">
    <location>
        <position position="172"/>
    </location>
</feature>
<name>SGF11_DROYA</name>
<comment type="function">
    <text evidence="2">Component of the transcription regulatory histone acetylation (HAT) complex SAGA, a multiprotein complex that activates transcription by remodeling chromatin and mediating histone acetylation and deubiquitination. Within the SAGA complex, participates in a subcomplex that specifically deubiquitinates histone H2B. The SAGA complex is recruited to specific gene promoters by activators, where it is required for transcription. Required for nuclear receptor-mediated transactivation. Binds independently on SAGA to promoters in an RNA-dependent manner. Binds to mRNA and is essential for total mRNA export from the nucleus. Required to counteract heterochromatin silencing. Controls the development of neuronal connectivity in visual system by being required for accurate axon targeting in the optic lobe. Required for expression of ecdysone-induced genes such as br/broad.</text>
</comment>
<comment type="subunit">
    <text evidence="2">Component of some SAGA transcription coactivator-HAT complexes, at least composed of Ada2b, not/nonstop, Pcaf/Gcn5, Sgf11 and Spt3. Within the SAGA complex, Sgf11, e(y)2, and not/nonstop form an additional subcomplex of SAGA called the DUB module (deubiquitination module). Interacts directly with not/nonstop. Interacts with the AMEX complex component xmas-2. Interacts with Cbp80; important for promoter recruitment of Sgf11 that is not associated with the DUB module.</text>
</comment>
<comment type="subcellular location">
    <subcellularLocation>
        <location evidence="2">Nucleus</location>
        <location evidence="2">Nucleoplasm</location>
    </subcellularLocation>
    <subcellularLocation>
        <location evidence="2">Cytoplasm</location>
    </subcellularLocation>
    <text evidence="2">Localizes to nuclear periphery, in contact with the nuclear pore complex (NPC).</text>
</comment>
<comment type="domain">
    <text evidence="2">The long N-terminal helix forms part of the 'assembly lobe' of the SAGA deubiquitination module.</text>
</comment>
<comment type="domain">
    <text evidence="2">The C-terminal SGF11-type zinc-finger domain together with the C-terminal catalytic domain of not/nonstop forms the 'catalytic lobe' of the SAGA deubiquitination module.</text>
</comment>
<comment type="similarity">
    <text evidence="2">Belongs to the SGF11 family.</text>
</comment>
<comment type="sequence caution" evidence="4">
    <conflict type="erroneous initiation">
        <sequence resource="EMBL-CDS" id="EDW94592"/>
    </conflict>
</comment>
<proteinExistence type="inferred from homology"/>
<organism>
    <name type="scientific">Drosophila yakuba</name>
    <name type="common">Fruit fly</name>
    <dbReference type="NCBI Taxonomy" id="7245"/>
    <lineage>
        <taxon>Eukaryota</taxon>
        <taxon>Metazoa</taxon>
        <taxon>Ecdysozoa</taxon>
        <taxon>Arthropoda</taxon>
        <taxon>Hexapoda</taxon>
        <taxon>Insecta</taxon>
        <taxon>Pterygota</taxon>
        <taxon>Neoptera</taxon>
        <taxon>Endopterygota</taxon>
        <taxon>Diptera</taxon>
        <taxon>Brachycera</taxon>
        <taxon>Muscomorpha</taxon>
        <taxon>Ephydroidea</taxon>
        <taxon>Drosophilidae</taxon>
        <taxon>Drosophila</taxon>
        <taxon>Sophophora</taxon>
    </lineage>
</organism>
<dbReference type="EMBL" id="CM000159">
    <property type="protein sequence ID" value="EDW94592.1"/>
    <property type="status" value="ALT_INIT"/>
    <property type="molecule type" value="Genomic_DNA"/>
</dbReference>
<dbReference type="SMR" id="B4PJ01"/>
<dbReference type="EnsemblMetazoa" id="FBtr0268581">
    <property type="protein sequence ID" value="FBpp0267073"/>
    <property type="gene ID" value="FBgn0239293"/>
</dbReference>
<dbReference type="EnsemblMetazoa" id="XM_002094844.4">
    <property type="protein sequence ID" value="XP_002094880.2"/>
    <property type="gene ID" value="LOC6534197"/>
</dbReference>
<dbReference type="GeneID" id="6534197"/>
<dbReference type="KEGG" id="dya:Dyak_GE22063"/>
<dbReference type="CTD" id="40035"/>
<dbReference type="eggNOG" id="KOG2612">
    <property type="taxonomic scope" value="Eukaryota"/>
</dbReference>
<dbReference type="OrthoDB" id="21557at2759"/>
<dbReference type="Proteomes" id="UP000002282">
    <property type="component" value="Chromosome 3L"/>
</dbReference>
<dbReference type="GO" id="GO:0005737">
    <property type="term" value="C:cytoplasm"/>
    <property type="evidence" value="ECO:0007669"/>
    <property type="project" value="UniProtKB-SubCell"/>
</dbReference>
<dbReference type="GO" id="GO:0071819">
    <property type="term" value="C:DUBm complex"/>
    <property type="evidence" value="ECO:0007669"/>
    <property type="project" value="UniProtKB-UniRule"/>
</dbReference>
<dbReference type="GO" id="GO:0005643">
    <property type="term" value="C:nuclear pore"/>
    <property type="evidence" value="ECO:0007669"/>
    <property type="project" value="UniProtKB-UniRule"/>
</dbReference>
<dbReference type="GO" id="GO:0005654">
    <property type="term" value="C:nucleoplasm"/>
    <property type="evidence" value="ECO:0007669"/>
    <property type="project" value="UniProtKB-SubCell"/>
</dbReference>
<dbReference type="GO" id="GO:0000124">
    <property type="term" value="C:SAGA complex"/>
    <property type="evidence" value="ECO:0000250"/>
    <property type="project" value="UniProtKB"/>
</dbReference>
<dbReference type="GO" id="GO:0003713">
    <property type="term" value="F:transcription coactivator activity"/>
    <property type="evidence" value="ECO:0007669"/>
    <property type="project" value="UniProtKB-UniRule"/>
</dbReference>
<dbReference type="GO" id="GO:0008270">
    <property type="term" value="F:zinc ion binding"/>
    <property type="evidence" value="ECO:0007669"/>
    <property type="project" value="UniProtKB-UniRule"/>
</dbReference>
<dbReference type="GO" id="GO:0006325">
    <property type="term" value="P:chromatin organization"/>
    <property type="evidence" value="ECO:0000250"/>
    <property type="project" value="UniProtKB"/>
</dbReference>
<dbReference type="GO" id="GO:0006406">
    <property type="term" value="P:mRNA export from nucleus"/>
    <property type="evidence" value="ECO:0007669"/>
    <property type="project" value="UniProtKB-UniRule"/>
</dbReference>
<dbReference type="GO" id="GO:0045893">
    <property type="term" value="P:positive regulation of DNA-templated transcription"/>
    <property type="evidence" value="ECO:0000250"/>
    <property type="project" value="UniProtKB"/>
</dbReference>
<dbReference type="GO" id="GO:0015031">
    <property type="term" value="P:protein transport"/>
    <property type="evidence" value="ECO:0007669"/>
    <property type="project" value="UniProtKB-KW"/>
</dbReference>
<dbReference type="GO" id="GO:0006357">
    <property type="term" value="P:regulation of transcription by RNA polymerase II"/>
    <property type="evidence" value="ECO:0007669"/>
    <property type="project" value="TreeGrafter"/>
</dbReference>
<dbReference type="FunFam" id="3.30.160.60:FF:000118">
    <property type="entry name" value="Ataxin-7-like protein 3"/>
    <property type="match status" value="1"/>
</dbReference>
<dbReference type="Gene3D" id="3.30.160.60">
    <property type="entry name" value="Classic Zinc Finger"/>
    <property type="match status" value="1"/>
</dbReference>
<dbReference type="HAMAP" id="MF_03047">
    <property type="entry name" value="Sgf11"/>
    <property type="match status" value="1"/>
</dbReference>
<dbReference type="InterPro" id="IPR013246">
    <property type="entry name" value="SAGA_su_Sgf11"/>
</dbReference>
<dbReference type="InterPro" id="IPR051078">
    <property type="entry name" value="SGF11"/>
</dbReference>
<dbReference type="PANTHER" id="PTHR46367">
    <property type="entry name" value="ATAXIN-7-LIKE PROTEIN 3"/>
    <property type="match status" value="1"/>
</dbReference>
<dbReference type="PANTHER" id="PTHR46367:SF1">
    <property type="entry name" value="ATAXIN-7-LIKE PROTEIN 3"/>
    <property type="match status" value="1"/>
</dbReference>
<dbReference type="Pfam" id="PF08209">
    <property type="entry name" value="Sgf11"/>
    <property type="match status" value="1"/>
</dbReference>
<sequence>MSAANMPTTTGAQGSGNQVPTTSTTIVNHFRELIKDPKNLDEASKYLFQTLLDDAVVGIFNETHHLRKSGNLAALDGVPEDSTYRMCEMPNLDIFGISTAKKPMDCTCPNCDRLVAAARFAPHLEKCMGMGRISSRIASRRLATKEGASSAHLHSAGNAGGTDDEDDVDWSSDKRRKKSNQNSRNNGSKKNNGKTF</sequence>
<keyword id="KW-0010">Activator</keyword>
<keyword id="KW-0156">Chromatin regulator</keyword>
<keyword id="KW-0963">Cytoplasm</keyword>
<keyword id="KW-0479">Metal-binding</keyword>
<keyword id="KW-0509">mRNA transport</keyword>
<keyword id="KW-0539">Nucleus</keyword>
<keyword id="KW-0597">Phosphoprotein</keyword>
<keyword id="KW-0653">Protein transport</keyword>
<keyword id="KW-0804">Transcription</keyword>
<keyword id="KW-0805">Transcription regulation</keyword>
<keyword id="KW-0811">Translocation</keyword>
<keyword id="KW-0813">Transport</keyword>
<keyword id="KW-0862">Zinc</keyword>
<keyword id="KW-0863">Zinc-finger</keyword>
<protein>
    <recommendedName>
        <fullName evidence="2">SAGA-associated factor 11 homolog</fullName>
    </recommendedName>
</protein>
<evidence type="ECO:0000250" key="1"/>
<evidence type="ECO:0000255" key="2">
    <source>
        <dbReference type="HAMAP-Rule" id="MF_03047"/>
    </source>
</evidence>
<evidence type="ECO:0000256" key="3">
    <source>
        <dbReference type="SAM" id="MobiDB-lite"/>
    </source>
</evidence>
<evidence type="ECO:0000305" key="4"/>
<gene>
    <name evidence="2" type="primary">Sgf11</name>
    <name type="ORF">GE22063</name>
</gene>
<reference key="1">
    <citation type="journal article" date="2007" name="Nature">
        <title>Evolution of genes and genomes on the Drosophila phylogeny.</title>
        <authorList>
            <consortium name="Drosophila 12 genomes consortium"/>
        </authorList>
    </citation>
    <scope>NUCLEOTIDE SEQUENCE [LARGE SCALE GENOMIC DNA]</scope>
    <source>
        <strain>Tai18E2 / Tucson 14021-0261.01</strain>
    </source>
</reference>